<sequence>MQAAQLSWELENAVTLIDPQRDSLYRYDEETHKYLSDTRPWTKDPHYFKSVRISAVALLKMVMHARSGGSLEVMGLMQGYILPNTFVVTDAFRLPVEGTETRVNAQDEANEYMVSYLQSCREAGRMENAVGWYHSHPGYGCWLSGIDVSTQDMQQMSGPFVAVVIDPERTISAGKVDIGAFRTFPKDYTPPKEEQEEDEYQTVPLNKAEDFGAHASHYYSLEVSLFKSALDTEILSLLWNKYWVATLSQSPLFTTRDYGSKQMLDLSQKTRRVARGIESNPPRGGAPTQVRDQQLERVVKDGQRIVSEEVKGLLAAEVKMQLFQGIGGKQTVEST</sequence>
<evidence type="ECO:0000250" key="1"/>
<evidence type="ECO:0000255" key="2">
    <source>
        <dbReference type="PROSITE-ProRule" id="PRU01182"/>
    </source>
</evidence>
<evidence type="ECO:0000269" key="3">
    <source>
    </source>
</evidence>
<evidence type="ECO:0000305" key="4"/>
<reference key="1">
    <citation type="journal article" date="2007" name="Proc. Natl. Acad. Sci. U.S.A.">
        <title>An eight-subunit COP9 signalosome with an intact JAMM motif is required for fungal fruit body formation.</title>
        <authorList>
            <person name="Busch S."/>
            <person name="Schwier E.U."/>
            <person name="Nahlik K."/>
            <person name="Bayram O."/>
            <person name="Helmstaedt K."/>
            <person name="Draht O.W."/>
            <person name="Krappmann S."/>
            <person name="Valerius O."/>
            <person name="Lipscomb W.N."/>
            <person name="Braus G.H."/>
        </authorList>
    </citation>
    <scope>NUCLEOTIDE SEQUENCE [GENOMIC DNA]</scope>
    <scope>FUNCTION</scope>
    <scope>IDENTIFICATION IN THE CSN COMPLEX</scope>
    <scope>IDENTIFICATION BY MASS SPECTROMETRY</scope>
    <scope>MUTAGENESIS OF HIS-134; HIS-136 AND ASP-147</scope>
    <source>
        <strain>FGSC A4 / ATCC 38163 / CBS 112.46 / NRRL 194 / M139</strain>
    </source>
</reference>
<reference key="2">
    <citation type="journal article" date="2005" name="Nature">
        <title>Sequencing of Aspergillus nidulans and comparative analysis with A. fumigatus and A. oryzae.</title>
        <authorList>
            <person name="Galagan J.E."/>
            <person name="Calvo S.E."/>
            <person name="Cuomo C."/>
            <person name="Ma L.-J."/>
            <person name="Wortman J.R."/>
            <person name="Batzoglou S."/>
            <person name="Lee S.-I."/>
            <person name="Bastuerkmen M."/>
            <person name="Spevak C.C."/>
            <person name="Clutterbuck J."/>
            <person name="Kapitonov V."/>
            <person name="Jurka J."/>
            <person name="Scazzocchio C."/>
            <person name="Farman M.L."/>
            <person name="Butler J."/>
            <person name="Purcell S."/>
            <person name="Harris S."/>
            <person name="Braus G.H."/>
            <person name="Draht O."/>
            <person name="Busch S."/>
            <person name="D'Enfert C."/>
            <person name="Bouchier C."/>
            <person name="Goldman G.H."/>
            <person name="Bell-Pedersen D."/>
            <person name="Griffiths-Jones S."/>
            <person name="Doonan J.H."/>
            <person name="Yu J."/>
            <person name="Vienken K."/>
            <person name="Pain A."/>
            <person name="Freitag M."/>
            <person name="Selker E.U."/>
            <person name="Archer D.B."/>
            <person name="Penalva M.A."/>
            <person name="Oakley B.R."/>
            <person name="Momany M."/>
            <person name="Tanaka T."/>
            <person name="Kumagai T."/>
            <person name="Asai K."/>
            <person name="Machida M."/>
            <person name="Nierman W.C."/>
            <person name="Denning D.W."/>
            <person name="Caddick M.X."/>
            <person name="Hynes M."/>
            <person name="Paoletti M."/>
            <person name="Fischer R."/>
            <person name="Miller B.L."/>
            <person name="Dyer P.S."/>
            <person name="Sachs M.S."/>
            <person name="Osmani S.A."/>
            <person name="Birren B.W."/>
        </authorList>
    </citation>
    <scope>NUCLEOTIDE SEQUENCE [LARGE SCALE GENOMIC DNA]</scope>
    <source>
        <strain>FGSC A4 / ATCC 38163 / CBS 112.46 / NRRL 194 / M139</strain>
    </source>
</reference>
<reference key="3">
    <citation type="journal article" date="2009" name="Fungal Genet. Biol.">
        <title>The 2008 update of the Aspergillus nidulans genome annotation: a community effort.</title>
        <authorList>
            <person name="Wortman J.R."/>
            <person name="Gilsenan J.M."/>
            <person name="Joardar V."/>
            <person name="Deegan J."/>
            <person name="Clutterbuck J."/>
            <person name="Andersen M.R."/>
            <person name="Archer D."/>
            <person name="Bencina M."/>
            <person name="Braus G."/>
            <person name="Coutinho P."/>
            <person name="von Dohren H."/>
            <person name="Doonan J."/>
            <person name="Driessen A.J."/>
            <person name="Durek P."/>
            <person name="Espeso E."/>
            <person name="Fekete E."/>
            <person name="Flipphi M."/>
            <person name="Estrada C.G."/>
            <person name="Geysens S."/>
            <person name="Goldman G."/>
            <person name="de Groot P.W."/>
            <person name="Hansen K."/>
            <person name="Harris S.D."/>
            <person name="Heinekamp T."/>
            <person name="Helmstaedt K."/>
            <person name="Henrissat B."/>
            <person name="Hofmann G."/>
            <person name="Homan T."/>
            <person name="Horio T."/>
            <person name="Horiuchi H."/>
            <person name="James S."/>
            <person name="Jones M."/>
            <person name="Karaffa L."/>
            <person name="Karanyi Z."/>
            <person name="Kato M."/>
            <person name="Keller N."/>
            <person name="Kelly D.E."/>
            <person name="Kiel J.A."/>
            <person name="Kim J.M."/>
            <person name="van der Klei I.J."/>
            <person name="Klis F.M."/>
            <person name="Kovalchuk A."/>
            <person name="Krasevec N."/>
            <person name="Kubicek C.P."/>
            <person name="Liu B."/>
            <person name="Maccabe A."/>
            <person name="Meyer V."/>
            <person name="Mirabito P."/>
            <person name="Miskei M."/>
            <person name="Mos M."/>
            <person name="Mullins J."/>
            <person name="Nelson D.R."/>
            <person name="Nielsen J."/>
            <person name="Oakley B.R."/>
            <person name="Osmani S.A."/>
            <person name="Pakula T."/>
            <person name="Paszewski A."/>
            <person name="Paulsen I."/>
            <person name="Pilsyk S."/>
            <person name="Pocsi I."/>
            <person name="Punt P.J."/>
            <person name="Ram A.F."/>
            <person name="Ren Q."/>
            <person name="Robellet X."/>
            <person name="Robson G."/>
            <person name="Seiboth B."/>
            <person name="van Solingen P."/>
            <person name="Specht T."/>
            <person name="Sun J."/>
            <person name="Taheri-Talesh N."/>
            <person name="Takeshita N."/>
            <person name="Ussery D."/>
            <person name="vanKuyk P.A."/>
            <person name="Visser H."/>
            <person name="van de Vondervoort P.J."/>
            <person name="de Vries R.P."/>
            <person name="Walton J."/>
            <person name="Xiang X."/>
            <person name="Xiong Y."/>
            <person name="Zeng A.P."/>
            <person name="Brandt B.W."/>
            <person name="Cornell M.J."/>
            <person name="van den Hondel C.A."/>
            <person name="Visser J."/>
            <person name="Oliver S.G."/>
            <person name="Turner G."/>
        </authorList>
    </citation>
    <scope>GENOME REANNOTATION</scope>
    <source>
        <strain>FGSC A4 / ATCC 38163 / CBS 112.46 / NRRL 194 / M139</strain>
    </source>
</reference>
<dbReference type="EC" id="3.4.-.-"/>
<dbReference type="EMBL" id="AY126455">
    <property type="protein sequence ID" value="AAM95164.1"/>
    <property type="molecule type" value="Genomic_DNA"/>
</dbReference>
<dbReference type="EMBL" id="AACD01000032">
    <property type="protein sequence ID" value="EAA64961.1"/>
    <property type="status" value="ALT_SEQ"/>
    <property type="molecule type" value="Genomic_DNA"/>
</dbReference>
<dbReference type="EMBL" id="BN001307">
    <property type="protein sequence ID" value="CBF86237.1"/>
    <property type="molecule type" value="Genomic_DNA"/>
</dbReference>
<dbReference type="RefSeq" id="XP_659733.1">
    <property type="nucleotide sequence ID" value="XM_654641.1"/>
</dbReference>
<dbReference type="SMR" id="Q5BBF1"/>
<dbReference type="DIP" id="DIP-60929N"/>
<dbReference type="IntAct" id="Q5BBF1">
    <property type="interactions" value="7"/>
</dbReference>
<dbReference type="STRING" id="227321.Q5BBF1"/>
<dbReference type="MEROPS" id="M67.A02"/>
<dbReference type="EnsemblFungi" id="CBF86237">
    <property type="protein sequence ID" value="CBF86237"/>
    <property type="gene ID" value="ANIA_02129"/>
</dbReference>
<dbReference type="GeneID" id="2875469"/>
<dbReference type="KEGG" id="ani:ANIA_02129"/>
<dbReference type="VEuPathDB" id="FungiDB:AN2129"/>
<dbReference type="eggNOG" id="KOG1554">
    <property type="taxonomic scope" value="Eukaryota"/>
</dbReference>
<dbReference type="HOGENOM" id="CLU_053034_0_2_1"/>
<dbReference type="InParanoid" id="Q5BBF1"/>
<dbReference type="OMA" id="VKMKLFQ"/>
<dbReference type="OrthoDB" id="605656at2759"/>
<dbReference type="Proteomes" id="UP000000560">
    <property type="component" value="Chromosome VII"/>
</dbReference>
<dbReference type="GO" id="GO:0008180">
    <property type="term" value="C:COP9 signalosome"/>
    <property type="evidence" value="ECO:0000314"/>
    <property type="project" value="AspGD"/>
</dbReference>
<dbReference type="GO" id="GO:0005737">
    <property type="term" value="C:cytoplasm"/>
    <property type="evidence" value="ECO:0000318"/>
    <property type="project" value="GO_Central"/>
</dbReference>
<dbReference type="GO" id="GO:0019784">
    <property type="term" value="F:deNEDDylase activity"/>
    <property type="evidence" value="ECO:0000318"/>
    <property type="project" value="GO_Central"/>
</dbReference>
<dbReference type="GO" id="GO:0046872">
    <property type="term" value="F:metal ion binding"/>
    <property type="evidence" value="ECO:0007669"/>
    <property type="project" value="UniProtKB-KW"/>
</dbReference>
<dbReference type="GO" id="GO:0004222">
    <property type="term" value="F:metalloendopeptidase activity"/>
    <property type="evidence" value="ECO:0000304"/>
    <property type="project" value="AspGD"/>
</dbReference>
<dbReference type="GO" id="GO:0008237">
    <property type="term" value="F:metallopeptidase activity"/>
    <property type="evidence" value="ECO:0000318"/>
    <property type="project" value="GO_Central"/>
</dbReference>
<dbReference type="GO" id="GO:0070791">
    <property type="term" value="P:cleistothecium development"/>
    <property type="evidence" value="ECO:0000315"/>
    <property type="project" value="AspGD"/>
</dbReference>
<dbReference type="GO" id="GO:0030448">
    <property type="term" value="P:hyphal growth"/>
    <property type="evidence" value="ECO:0000315"/>
    <property type="project" value="AspGD"/>
</dbReference>
<dbReference type="GO" id="GO:0000338">
    <property type="term" value="P:protein deneddylation"/>
    <property type="evidence" value="ECO:0000304"/>
    <property type="project" value="AspGD"/>
</dbReference>
<dbReference type="GO" id="GO:0045116">
    <property type="term" value="P:protein neddylation"/>
    <property type="evidence" value="ECO:0000315"/>
    <property type="project" value="AspGD"/>
</dbReference>
<dbReference type="GO" id="GO:0006508">
    <property type="term" value="P:proteolysis"/>
    <property type="evidence" value="ECO:0007669"/>
    <property type="project" value="UniProtKB-KW"/>
</dbReference>
<dbReference type="GO" id="GO:0051726">
    <property type="term" value="P:regulation of cell cycle"/>
    <property type="evidence" value="ECO:0000318"/>
    <property type="project" value="GO_Central"/>
</dbReference>
<dbReference type="CDD" id="cd08069">
    <property type="entry name" value="MPN_RPN11_CSN5"/>
    <property type="match status" value="1"/>
</dbReference>
<dbReference type="FunFam" id="3.40.140.10:FF:000003">
    <property type="entry name" value="COP9 signalosome complex subunit 5"/>
    <property type="match status" value="1"/>
</dbReference>
<dbReference type="Gene3D" id="3.40.140.10">
    <property type="entry name" value="Cytidine Deaminase, domain 2"/>
    <property type="match status" value="1"/>
</dbReference>
<dbReference type="InterPro" id="IPR040961">
    <property type="entry name" value="CSN5_C"/>
</dbReference>
<dbReference type="InterPro" id="IPR000555">
    <property type="entry name" value="JAMM/MPN+_dom"/>
</dbReference>
<dbReference type="InterPro" id="IPR050242">
    <property type="entry name" value="JAMM_MPN+_peptidase_M67A"/>
</dbReference>
<dbReference type="InterPro" id="IPR037518">
    <property type="entry name" value="MPN"/>
</dbReference>
<dbReference type="PANTHER" id="PTHR10410">
    <property type="entry name" value="EUKARYOTIC TRANSLATION INITIATION FACTOR 3 -RELATED"/>
    <property type="match status" value="1"/>
</dbReference>
<dbReference type="Pfam" id="PF18323">
    <property type="entry name" value="CSN5_C"/>
    <property type="match status" value="1"/>
</dbReference>
<dbReference type="Pfam" id="PF01398">
    <property type="entry name" value="JAB"/>
    <property type="match status" value="1"/>
</dbReference>
<dbReference type="SMART" id="SM00232">
    <property type="entry name" value="JAB_MPN"/>
    <property type="match status" value="1"/>
</dbReference>
<dbReference type="SUPFAM" id="SSF102712">
    <property type="entry name" value="JAB1/MPN domain"/>
    <property type="match status" value="1"/>
</dbReference>
<dbReference type="PROSITE" id="PS50249">
    <property type="entry name" value="MPN"/>
    <property type="match status" value="1"/>
</dbReference>
<name>CSN5_EMENI</name>
<gene>
    <name type="primary">rri1</name>
    <name type="synonym">csn5</name>
    <name type="synonym">csnE</name>
    <name type="ORF">AN2129</name>
</gene>
<protein>
    <recommendedName>
        <fullName>COP9 signalosome complex subunit 5</fullName>
        <ecNumber>3.4.-.-</ecNumber>
    </recommendedName>
</protein>
<proteinExistence type="evidence at protein level"/>
<comment type="function">
    <text evidence="1 3">Catalytic component of the COP9 signalosome (CSN) complex that acts as an regulator of the ubiquitin (Ubl) conjugation pathway by mediating the deneddylation of the cullin subunit of SCF-type E3 ubiquitin-protein ligase complexes (By similarity). The CSN complex seems to link protein degradation to sexual development. Required for fruit body formation.</text>
</comment>
<comment type="subunit">
    <text evidence="1">Component of the COP9 signalosome (CSN) complex.</text>
</comment>
<comment type="interaction">
    <interactant intactId="EBI-15634720">
        <id>Q5BBF1</id>
    </interactant>
    <interactant intactId="EBI-15634741">
        <id>Q5BB47</id>
        <label>csnF</label>
    </interactant>
    <organismsDiffer>false</organismsDiffer>
    <experiments>3</experiments>
</comment>
<comment type="subcellular location">
    <subcellularLocation>
        <location evidence="1">Cytoplasm</location>
    </subcellularLocation>
    <subcellularLocation>
        <location evidence="1">Nucleus</location>
    </subcellularLocation>
</comment>
<comment type="domain">
    <text evidence="1">The JAMM motif is essential for the protease activity of the CSN complex resulting in deneddylation of cullins. It constitutes the catalytic center of the complex (By similarity).</text>
</comment>
<comment type="similarity">
    <text evidence="4">Belongs to the peptidase M67A family. CSN5 subfamily.</text>
</comment>
<comment type="sequence caution" evidence="4">
    <conflict type="erroneous gene model prediction">
        <sequence resource="EMBL-CDS" id="EAA64961"/>
    </conflict>
</comment>
<keyword id="KW-0963">Cytoplasm</keyword>
<keyword id="KW-0378">Hydrolase</keyword>
<keyword id="KW-0479">Metal-binding</keyword>
<keyword id="KW-0482">Metalloprotease</keyword>
<keyword id="KW-0539">Nucleus</keyword>
<keyword id="KW-0645">Protease</keyword>
<keyword id="KW-1185">Reference proteome</keyword>
<keyword id="KW-0736">Signalosome</keyword>
<keyword id="KW-0862">Zinc</keyword>
<organism>
    <name type="scientific">Emericella nidulans (strain FGSC A4 / ATCC 38163 / CBS 112.46 / NRRL 194 / M139)</name>
    <name type="common">Aspergillus nidulans</name>
    <dbReference type="NCBI Taxonomy" id="227321"/>
    <lineage>
        <taxon>Eukaryota</taxon>
        <taxon>Fungi</taxon>
        <taxon>Dikarya</taxon>
        <taxon>Ascomycota</taxon>
        <taxon>Pezizomycotina</taxon>
        <taxon>Eurotiomycetes</taxon>
        <taxon>Eurotiomycetidae</taxon>
        <taxon>Eurotiales</taxon>
        <taxon>Aspergillaceae</taxon>
        <taxon>Aspergillus</taxon>
        <taxon>Aspergillus subgen. Nidulantes</taxon>
    </lineage>
</organism>
<accession>Q5BBF1</accession>
<accession>C8VM14</accession>
<accession>Q4L2Q0</accession>
<feature type="chain" id="PRO_0000194852" description="COP9 signalosome complex subunit 5">
    <location>
        <begin position="1"/>
        <end position="335"/>
    </location>
</feature>
<feature type="domain" description="MPN" evidence="2">
    <location>
        <begin position="51"/>
        <end position="187"/>
    </location>
</feature>
<feature type="short sequence motif" description="JAMM motif" evidence="2">
    <location>
        <begin position="134"/>
        <end position="147"/>
    </location>
</feature>
<feature type="binding site" evidence="2">
    <location>
        <position position="134"/>
    </location>
    <ligand>
        <name>Zn(2+)</name>
        <dbReference type="ChEBI" id="CHEBI:29105"/>
        <note>catalytic</note>
    </ligand>
</feature>
<feature type="binding site" evidence="2">
    <location>
        <position position="136"/>
    </location>
    <ligand>
        <name>Zn(2+)</name>
        <dbReference type="ChEBI" id="CHEBI:29105"/>
        <note>catalytic</note>
    </ligand>
</feature>
<feature type="binding site" evidence="2">
    <location>
        <position position="147"/>
    </location>
    <ligand>
        <name>Zn(2+)</name>
        <dbReference type="ChEBI" id="CHEBI:29105"/>
        <note>catalytic</note>
    </ligand>
</feature>
<feature type="mutagenesis site" description="Inhibits fruit body formation; when associated with A-136 and A-147." evidence="3">
    <original>H</original>
    <variation>A</variation>
    <location>
        <position position="134"/>
    </location>
</feature>
<feature type="mutagenesis site" description="Inhibits fruit body formation; when associated with A-134 and A-147." evidence="3">
    <original>H</original>
    <variation>A</variation>
    <location>
        <position position="136"/>
    </location>
</feature>
<feature type="mutagenesis site" description="Inhibits fruit body formation." evidence="3">
    <original>D</original>
    <variation>A</variation>
    <location>
        <position position="147"/>
    </location>
</feature>
<feature type="mutagenesis site" description="Inhibits fruit body formation; when associated with A-134 and A-136." evidence="3">
    <original>D</original>
    <variation>A</variation>
    <location>
        <position position="147"/>
    </location>
</feature>